<keyword id="KW-0677">Repeat</keyword>
<keyword id="KW-0807">Transducer</keyword>
<keyword id="KW-0853">WD repeat</keyword>
<dbReference type="EMBL" id="AF044735">
    <property type="protein sequence ID" value="AAC02998.1"/>
    <property type="molecule type" value="mRNA"/>
</dbReference>
<dbReference type="SMR" id="O45040"/>
<dbReference type="OrthoDB" id="10255630at2759"/>
<dbReference type="GO" id="GO:0007165">
    <property type="term" value="P:signal transduction"/>
    <property type="evidence" value="ECO:0007669"/>
    <property type="project" value="UniProtKB-KW"/>
</dbReference>
<dbReference type="CDD" id="cd00200">
    <property type="entry name" value="WD40"/>
    <property type="match status" value="1"/>
</dbReference>
<dbReference type="FunFam" id="2.130.10.10:FF:000007">
    <property type="entry name" value="Guanine nucleotide-binding protein G(I)/G(S)/G(T) subunit beta-1"/>
    <property type="match status" value="1"/>
</dbReference>
<dbReference type="Gene3D" id="2.130.10.10">
    <property type="entry name" value="YVTN repeat-like/Quinoprotein amine dehydrogenase"/>
    <property type="match status" value="1"/>
</dbReference>
<dbReference type="InterPro" id="IPR020472">
    <property type="entry name" value="G-protein_beta_WD-40_rep"/>
</dbReference>
<dbReference type="InterPro" id="IPR001632">
    <property type="entry name" value="Gprotein_B"/>
</dbReference>
<dbReference type="InterPro" id="IPR016346">
    <property type="entry name" value="Guanine_nucleotide-bd_bsu"/>
</dbReference>
<dbReference type="InterPro" id="IPR015943">
    <property type="entry name" value="WD40/YVTN_repeat-like_dom_sf"/>
</dbReference>
<dbReference type="InterPro" id="IPR019775">
    <property type="entry name" value="WD40_repeat_CS"/>
</dbReference>
<dbReference type="InterPro" id="IPR036322">
    <property type="entry name" value="WD40_repeat_dom_sf"/>
</dbReference>
<dbReference type="InterPro" id="IPR001680">
    <property type="entry name" value="WD40_rpt"/>
</dbReference>
<dbReference type="PANTHER" id="PTHR19850">
    <property type="entry name" value="GUANINE NUCLEOTIDE-BINDING PROTEIN BETA G PROTEIN BETA"/>
    <property type="match status" value="1"/>
</dbReference>
<dbReference type="Pfam" id="PF25391">
    <property type="entry name" value="WD40_Gbeta"/>
    <property type="match status" value="1"/>
</dbReference>
<dbReference type="PIRSF" id="PIRSF002394">
    <property type="entry name" value="GN-bd_beta"/>
    <property type="match status" value="1"/>
</dbReference>
<dbReference type="PRINTS" id="PR00319">
    <property type="entry name" value="GPROTEINB"/>
</dbReference>
<dbReference type="PRINTS" id="PR00320">
    <property type="entry name" value="GPROTEINBRPT"/>
</dbReference>
<dbReference type="SMART" id="SM00320">
    <property type="entry name" value="WD40"/>
    <property type="match status" value="7"/>
</dbReference>
<dbReference type="SUPFAM" id="SSF50978">
    <property type="entry name" value="WD40 repeat-like"/>
    <property type="match status" value="1"/>
</dbReference>
<dbReference type="PROSITE" id="PS00678">
    <property type="entry name" value="WD_REPEATS_1"/>
    <property type="match status" value="3"/>
</dbReference>
<dbReference type="PROSITE" id="PS50082">
    <property type="entry name" value="WD_REPEATS_2"/>
    <property type="match status" value="6"/>
</dbReference>
<dbReference type="PROSITE" id="PS50294">
    <property type="entry name" value="WD_REPEATS_REGION"/>
    <property type="match status" value="1"/>
</dbReference>
<protein>
    <recommendedName>
        <fullName>Guanine nucleotide-binding protein G(I)/G(S)/G(T) subunit beta-1</fullName>
    </recommendedName>
    <alternativeName>
        <fullName>Transducin beta chain 1</fullName>
    </alternativeName>
</protein>
<proteinExistence type="evidence at transcript level"/>
<evidence type="ECO:0000305" key="1"/>
<name>GBB1_HOMAM</name>
<reference key="1">
    <citation type="journal article" date="1998" name="J. Neurobiol.">
        <title>Molecular cloning of a lobster Gbeta subunit and Gbeta expression in olfactory receptor neuron dendrites and brain neuropil.</title>
        <authorList>
            <person name="Xu F."/>
            <person name="Hollins B."/>
            <person name="Landers T.M."/>
            <person name="McClintock T.S."/>
        </authorList>
    </citation>
    <scope>NUCLEOTIDE SEQUENCE [MRNA]</scope>
</reference>
<feature type="chain" id="PRO_0000127693" description="Guanine nucleotide-binding protein G(I)/G(S)/G(T) subunit beta-1">
    <location>
        <begin position="1"/>
        <end position="340"/>
    </location>
</feature>
<feature type="repeat" description="WD 1">
    <location>
        <begin position="53"/>
        <end position="83"/>
    </location>
</feature>
<feature type="repeat" description="WD 2">
    <location>
        <begin position="95"/>
        <end position="125"/>
    </location>
</feature>
<feature type="repeat" description="WD 3">
    <location>
        <begin position="141"/>
        <end position="170"/>
    </location>
</feature>
<feature type="repeat" description="WD 4">
    <location>
        <begin position="182"/>
        <end position="212"/>
    </location>
</feature>
<feature type="repeat" description="WD 5">
    <location>
        <begin position="224"/>
        <end position="254"/>
    </location>
</feature>
<feature type="repeat" description="WD 6">
    <location>
        <begin position="268"/>
        <end position="298"/>
    </location>
</feature>
<feature type="repeat" description="WD 7">
    <location>
        <begin position="310"/>
        <end position="340"/>
    </location>
</feature>
<comment type="function">
    <text>Guanine nucleotide-binding proteins (G proteins) are involved as a modulator or transducer in various transmembrane signaling systems. The beta and gamma chains are required for the GTPase activity, for replacement of GDP by GTP, and for G protein-effector interaction.</text>
</comment>
<comment type="subunit">
    <text>G proteins are composed of 3 units, alpha, beta and gamma.</text>
</comment>
<comment type="similarity">
    <text evidence="1">Belongs to the WD repeat G protein beta family.</text>
</comment>
<gene>
    <name type="primary">GBETA1</name>
</gene>
<organism>
    <name type="scientific">Homarus americanus</name>
    <name type="common">American lobster</name>
    <dbReference type="NCBI Taxonomy" id="6706"/>
    <lineage>
        <taxon>Eukaryota</taxon>
        <taxon>Metazoa</taxon>
        <taxon>Ecdysozoa</taxon>
        <taxon>Arthropoda</taxon>
        <taxon>Crustacea</taxon>
        <taxon>Multicrustacea</taxon>
        <taxon>Malacostraca</taxon>
        <taxon>Eumalacostraca</taxon>
        <taxon>Eucarida</taxon>
        <taxon>Decapoda</taxon>
        <taxon>Pleocyemata</taxon>
        <taxon>Astacidea</taxon>
        <taxon>Nephropoidea</taxon>
        <taxon>Nephropidae</taxon>
        <taxon>Homarus</taxon>
    </lineage>
</organism>
<sequence length="340" mass="37409">MNDLDSLRQEAERLKNTIRDARKNALDTTLVQATAGMDPIGRIQMRTRRTLRGHLAKIYAMHWGSDSRNLVSASQDGKLIVWDSYTTNKVHAIPLRSSWVMTCAYAPSGSYVACGGLDNICSIYSLKTREGNVRVSRELPGHTGYLSCCRFVDDNQIVTSSGDMTCALWDIETGQQCTQFTGHTGDVMSLSLSPNMRTFTSGACDASAKLWDIRDGMCRQTFPGHESDINAVTFFPNGHAFATGSDDATCRLFDIRADQELAMYSHDNIICGITSVAFSKSGKLLLAGYDDFNCNVWDSMRTERAGVLAGHDNRVSCLGVTEDGMAVATGSWDSFLKIWN</sequence>
<accession>O45040</accession>